<name>DTD_BURM7</name>
<reference key="1">
    <citation type="journal article" date="2010" name="Genome Biol. Evol.">
        <title>Continuing evolution of Burkholderia mallei through genome reduction and large-scale rearrangements.</title>
        <authorList>
            <person name="Losada L."/>
            <person name="Ronning C.M."/>
            <person name="DeShazer D."/>
            <person name="Woods D."/>
            <person name="Fedorova N."/>
            <person name="Kim H.S."/>
            <person name="Shabalina S.A."/>
            <person name="Pearson T.R."/>
            <person name="Brinkac L."/>
            <person name="Tan P."/>
            <person name="Nandi T."/>
            <person name="Crabtree J."/>
            <person name="Badger J."/>
            <person name="Beckstrom-Sternberg S."/>
            <person name="Saqib M."/>
            <person name="Schutzer S.E."/>
            <person name="Keim P."/>
            <person name="Nierman W.C."/>
        </authorList>
    </citation>
    <scope>NUCLEOTIDE SEQUENCE [LARGE SCALE GENOMIC DNA]</scope>
    <source>
        <strain>NCTC 10247</strain>
    </source>
</reference>
<accession>A3MP68</accession>
<proteinExistence type="inferred from homology"/>
<keyword id="KW-0963">Cytoplasm</keyword>
<keyword id="KW-0378">Hydrolase</keyword>
<keyword id="KW-0694">RNA-binding</keyword>
<keyword id="KW-0820">tRNA-binding</keyword>
<evidence type="ECO:0000255" key="1">
    <source>
        <dbReference type="HAMAP-Rule" id="MF_00518"/>
    </source>
</evidence>
<protein>
    <recommendedName>
        <fullName evidence="1">D-aminoacyl-tRNA deacylase</fullName>
        <shortName evidence="1">DTD</shortName>
        <ecNumber evidence="1">3.1.1.96</ecNumber>
    </recommendedName>
    <alternativeName>
        <fullName evidence="1">Gly-tRNA(Ala) deacylase</fullName>
    </alternativeName>
</protein>
<feature type="chain" id="PRO_1000050817" description="D-aminoacyl-tRNA deacylase">
    <location>
        <begin position="1"/>
        <end position="152"/>
    </location>
</feature>
<feature type="short sequence motif" description="Gly-cisPro motif, important for rejection of L-amino acids" evidence="1">
    <location>
        <begin position="142"/>
        <end position="143"/>
    </location>
</feature>
<sequence length="152" mass="16254">MIALIQRVKRADVRVGERVTGEIGPGLLALVCAERGDTEAAADKLLAKVLGYRVFSDAAGKMNLPVSNLDGAGRAGGLLLVSQFTLAADTNSGLRPSFTPAAPPDEGERLFDYFVRRARERHPIVATGEFGADMQVSLVNDGPVTFWLQTRA</sequence>
<dbReference type="EC" id="3.1.1.96" evidence="1"/>
<dbReference type="EMBL" id="CP000548">
    <property type="protein sequence ID" value="ABO04374.1"/>
    <property type="molecule type" value="Genomic_DNA"/>
</dbReference>
<dbReference type="RefSeq" id="WP_004200499.1">
    <property type="nucleotide sequence ID" value="NZ_CP007802.1"/>
</dbReference>
<dbReference type="SMR" id="A3MP68"/>
<dbReference type="GeneID" id="93061498"/>
<dbReference type="KEGG" id="bmaz:BM44_776"/>
<dbReference type="KEGG" id="bmn:BMA10247_2528"/>
<dbReference type="PATRIC" id="fig|320389.8.peg.862"/>
<dbReference type="GO" id="GO:0005737">
    <property type="term" value="C:cytoplasm"/>
    <property type="evidence" value="ECO:0007669"/>
    <property type="project" value="UniProtKB-SubCell"/>
</dbReference>
<dbReference type="GO" id="GO:0051500">
    <property type="term" value="F:D-tyrosyl-tRNA(Tyr) deacylase activity"/>
    <property type="evidence" value="ECO:0007669"/>
    <property type="project" value="TreeGrafter"/>
</dbReference>
<dbReference type="GO" id="GO:0106026">
    <property type="term" value="F:Gly-tRNA(Ala) deacylase activity"/>
    <property type="evidence" value="ECO:0007669"/>
    <property type="project" value="UniProtKB-UniRule"/>
</dbReference>
<dbReference type="GO" id="GO:0043908">
    <property type="term" value="F:Ser(Gly)-tRNA(Ala) hydrolase activity"/>
    <property type="evidence" value="ECO:0007669"/>
    <property type="project" value="UniProtKB-UniRule"/>
</dbReference>
<dbReference type="GO" id="GO:0000049">
    <property type="term" value="F:tRNA binding"/>
    <property type="evidence" value="ECO:0007669"/>
    <property type="project" value="UniProtKB-UniRule"/>
</dbReference>
<dbReference type="GO" id="GO:0019478">
    <property type="term" value="P:D-amino acid catabolic process"/>
    <property type="evidence" value="ECO:0007669"/>
    <property type="project" value="UniProtKB-UniRule"/>
</dbReference>
<dbReference type="CDD" id="cd00563">
    <property type="entry name" value="Dtyr_deacylase"/>
    <property type="match status" value="1"/>
</dbReference>
<dbReference type="FunFam" id="3.50.80.10:FF:000001">
    <property type="entry name" value="D-aminoacyl-tRNA deacylase"/>
    <property type="match status" value="1"/>
</dbReference>
<dbReference type="Gene3D" id="3.50.80.10">
    <property type="entry name" value="D-tyrosyl-tRNA(Tyr) deacylase"/>
    <property type="match status" value="1"/>
</dbReference>
<dbReference type="HAMAP" id="MF_00518">
    <property type="entry name" value="Deacylase_Dtd"/>
    <property type="match status" value="1"/>
</dbReference>
<dbReference type="InterPro" id="IPR003732">
    <property type="entry name" value="Daa-tRNA_deacyls_DTD"/>
</dbReference>
<dbReference type="InterPro" id="IPR023509">
    <property type="entry name" value="DTD-like_sf"/>
</dbReference>
<dbReference type="NCBIfam" id="TIGR00256">
    <property type="entry name" value="D-aminoacyl-tRNA deacylase"/>
    <property type="match status" value="1"/>
</dbReference>
<dbReference type="PANTHER" id="PTHR10472:SF5">
    <property type="entry name" value="D-AMINOACYL-TRNA DEACYLASE 1"/>
    <property type="match status" value="1"/>
</dbReference>
<dbReference type="PANTHER" id="PTHR10472">
    <property type="entry name" value="D-TYROSYL-TRNA TYR DEACYLASE"/>
    <property type="match status" value="1"/>
</dbReference>
<dbReference type="Pfam" id="PF02580">
    <property type="entry name" value="Tyr_Deacylase"/>
    <property type="match status" value="1"/>
</dbReference>
<dbReference type="SUPFAM" id="SSF69500">
    <property type="entry name" value="DTD-like"/>
    <property type="match status" value="1"/>
</dbReference>
<gene>
    <name evidence="1" type="primary">dtd</name>
    <name type="ordered locus">BMA10247_2528</name>
</gene>
<comment type="function">
    <text evidence="1">An aminoacyl-tRNA editing enzyme that deacylates mischarged D-aminoacyl-tRNAs. Also deacylates mischarged glycyl-tRNA(Ala), protecting cells against glycine mischarging by AlaRS. Acts via tRNA-based rather than protein-based catalysis; rejects L-amino acids rather than detecting D-amino acids in the active site. By recycling D-aminoacyl-tRNA to D-amino acids and free tRNA molecules, this enzyme counteracts the toxicity associated with the formation of D-aminoacyl-tRNA entities in vivo and helps enforce protein L-homochirality.</text>
</comment>
<comment type="catalytic activity">
    <reaction evidence="1">
        <text>glycyl-tRNA(Ala) + H2O = tRNA(Ala) + glycine + H(+)</text>
        <dbReference type="Rhea" id="RHEA:53744"/>
        <dbReference type="Rhea" id="RHEA-COMP:9657"/>
        <dbReference type="Rhea" id="RHEA-COMP:13640"/>
        <dbReference type="ChEBI" id="CHEBI:15377"/>
        <dbReference type="ChEBI" id="CHEBI:15378"/>
        <dbReference type="ChEBI" id="CHEBI:57305"/>
        <dbReference type="ChEBI" id="CHEBI:78442"/>
        <dbReference type="ChEBI" id="CHEBI:78522"/>
        <dbReference type="EC" id="3.1.1.96"/>
    </reaction>
</comment>
<comment type="catalytic activity">
    <reaction evidence="1">
        <text>a D-aminoacyl-tRNA + H2O = a tRNA + a D-alpha-amino acid + H(+)</text>
        <dbReference type="Rhea" id="RHEA:13953"/>
        <dbReference type="Rhea" id="RHEA-COMP:10123"/>
        <dbReference type="Rhea" id="RHEA-COMP:10124"/>
        <dbReference type="ChEBI" id="CHEBI:15377"/>
        <dbReference type="ChEBI" id="CHEBI:15378"/>
        <dbReference type="ChEBI" id="CHEBI:59871"/>
        <dbReference type="ChEBI" id="CHEBI:78442"/>
        <dbReference type="ChEBI" id="CHEBI:79333"/>
        <dbReference type="EC" id="3.1.1.96"/>
    </reaction>
</comment>
<comment type="subunit">
    <text evidence="1">Homodimer.</text>
</comment>
<comment type="subcellular location">
    <subcellularLocation>
        <location evidence="1">Cytoplasm</location>
    </subcellularLocation>
</comment>
<comment type="domain">
    <text evidence="1">A Gly-cisPro motif from one monomer fits into the active site of the other monomer to allow specific chiral rejection of L-amino acids.</text>
</comment>
<comment type="similarity">
    <text evidence="1">Belongs to the DTD family.</text>
</comment>
<organism>
    <name type="scientific">Burkholderia mallei (strain NCTC 10247)</name>
    <dbReference type="NCBI Taxonomy" id="320389"/>
    <lineage>
        <taxon>Bacteria</taxon>
        <taxon>Pseudomonadati</taxon>
        <taxon>Pseudomonadota</taxon>
        <taxon>Betaproteobacteria</taxon>
        <taxon>Burkholderiales</taxon>
        <taxon>Burkholderiaceae</taxon>
        <taxon>Burkholderia</taxon>
        <taxon>pseudomallei group</taxon>
    </lineage>
</organism>